<dbReference type="EMBL" id="AF012900">
    <property type="protein sequence ID" value="AAC48771.1"/>
    <property type="molecule type" value="mRNA"/>
</dbReference>
<dbReference type="EMBL" id="AF012901">
    <property type="protein sequence ID" value="AAC48772.1"/>
    <property type="molecule type" value="mRNA"/>
</dbReference>
<dbReference type="RefSeq" id="NP_776901.1">
    <property type="nucleotide sequence ID" value="NM_174476.2"/>
</dbReference>
<dbReference type="SMR" id="O18784"/>
<dbReference type="FunCoup" id="O18784">
    <property type="interactions" value="89"/>
</dbReference>
<dbReference type="STRING" id="9913.ENSBTAP00000002887"/>
<dbReference type="PaxDb" id="9913-ENSBTAP00000002887"/>
<dbReference type="GeneID" id="282100"/>
<dbReference type="KEGG" id="bta:282100"/>
<dbReference type="CTD" id="7220"/>
<dbReference type="eggNOG" id="KOG3609">
    <property type="taxonomic scope" value="Eukaryota"/>
</dbReference>
<dbReference type="InParanoid" id="O18784"/>
<dbReference type="OrthoDB" id="2373987at2759"/>
<dbReference type="Proteomes" id="UP000009136">
    <property type="component" value="Unplaced"/>
</dbReference>
<dbReference type="GO" id="GO:0034703">
    <property type="term" value="C:cation channel complex"/>
    <property type="evidence" value="ECO:0000318"/>
    <property type="project" value="GO_Central"/>
</dbReference>
<dbReference type="GO" id="GO:0005886">
    <property type="term" value="C:plasma membrane"/>
    <property type="evidence" value="ECO:0000318"/>
    <property type="project" value="GO_Central"/>
</dbReference>
<dbReference type="GO" id="GO:0070679">
    <property type="term" value="F:inositol 1,4,5 trisphosphate binding"/>
    <property type="evidence" value="ECO:0000318"/>
    <property type="project" value="GO_Central"/>
</dbReference>
<dbReference type="GO" id="GO:0015279">
    <property type="term" value="F:store-operated calcium channel activity"/>
    <property type="evidence" value="ECO:0000250"/>
    <property type="project" value="UniProtKB"/>
</dbReference>
<dbReference type="GO" id="GO:0070588">
    <property type="term" value="P:calcium ion transmembrane transport"/>
    <property type="evidence" value="ECO:0000318"/>
    <property type="project" value="GO_Central"/>
</dbReference>
<dbReference type="GO" id="GO:0051480">
    <property type="term" value="P:regulation of cytosolic calcium ion concentration"/>
    <property type="evidence" value="ECO:0000318"/>
    <property type="project" value="GO_Central"/>
</dbReference>
<dbReference type="FunFam" id="1.25.40.20:FF:000088">
    <property type="entry name" value="short transient receptor potential channel 1 isoform X1"/>
    <property type="match status" value="1"/>
</dbReference>
<dbReference type="FunFam" id="1.10.287.70:FF:000266">
    <property type="entry name" value="Transient receptor potential cation channel subfamily c member 1"/>
    <property type="match status" value="1"/>
</dbReference>
<dbReference type="Gene3D" id="1.25.40.20">
    <property type="entry name" value="Ankyrin repeat-containing domain"/>
    <property type="match status" value="1"/>
</dbReference>
<dbReference type="InterPro" id="IPR002110">
    <property type="entry name" value="Ankyrin_rpt"/>
</dbReference>
<dbReference type="InterPro" id="IPR036770">
    <property type="entry name" value="Ankyrin_rpt-contain_sf"/>
</dbReference>
<dbReference type="InterPro" id="IPR005821">
    <property type="entry name" value="Ion_trans_dom"/>
</dbReference>
<dbReference type="InterPro" id="IPR013555">
    <property type="entry name" value="TRP_dom"/>
</dbReference>
<dbReference type="InterPro" id="IPR005457">
    <property type="entry name" value="TRPC1_channel"/>
</dbReference>
<dbReference type="InterPro" id="IPR002153">
    <property type="entry name" value="TRPC_channel"/>
</dbReference>
<dbReference type="NCBIfam" id="TIGR00870">
    <property type="entry name" value="trp"/>
    <property type="match status" value="1"/>
</dbReference>
<dbReference type="PANTHER" id="PTHR10117:SF56">
    <property type="entry name" value="SHORT TRANSIENT RECEPTOR POTENTIAL CHANNEL 1"/>
    <property type="match status" value="1"/>
</dbReference>
<dbReference type="PANTHER" id="PTHR10117">
    <property type="entry name" value="TRANSIENT RECEPTOR POTENTIAL CHANNEL"/>
    <property type="match status" value="1"/>
</dbReference>
<dbReference type="Pfam" id="PF00520">
    <property type="entry name" value="Ion_trans"/>
    <property type="match status" value="1"/>
</dbReference>
<dbReference type="Pfam" id="PF08344">
    <property type="entry name" value="TRP_2"/>
    <property type="match status" value="1"/>
</dbReference>
<dbReference type="PRINTS" id="PR01097">
    <property type="entry name" value="TRNSRECEPTRP"/>
</dbReference>
<dbReference type="PRINTS" id="PR01642">
    <property type="entry name" value="TRPCHANNEL1"/>
</dbReference>
<dbReference type="SMART" id="SM00248">
    <property type="entry name" value="ANK"/>
    <property type="match status" value="3"/>
</dbReference>
<dbReference type="SMART" id="SM01420">
    <property type="entry name" value="TRP_2"/>
    <property type="match status" value="1"/>
</dbReference>
<dbReference type="SUPFAM" id="SSF48403">
    <property type="entry name" value="Ankyrin repeat"/>
    <property type="match status" value="1"/>
</dbReference>
<protein>
    <recommendedName>
        <fullName>Short transient receptor potential channel 1</fullName>
        <shortName>TrpC1</shortName>
    </recommendedName>
    <alternativeName>
        <fullName>Transient receptor protein 1</fullName>
        <shortName>TRP-1</shortName>
    </alternativeName>
</protein>
<comment type="function">
    <text evidence="1">Forms a receptor-activated non-selective calcium permeant cation channel. Forms a heteromeric ion channel with TRPC4 or TRPC5 that has reduced calcium permeability compared to the homomeric TRPC4 or TRPC5 channel (By similarity). Also permeable to monovalent ions including sodium, lithium and cesium ions (By similarity).</text>
</comment>
<comment type="catalytic activity">
    <reaction evidence="1">
        <text>Ca(2+)(in) = Ca(2+)(out)</text>
        <dbReference type="Rhea" id="RHEA:29671"/>
        <dbReference type="ChEBI" id="CHEBI:29108"/>
    </reaction>
</comment>
<comment type="catalytic activity">
    <reaction evidence="1">
        <text>Na(+)(in) = Na(+)(out)</text>
        <dbReference type="Rhea" id="RHEA:34963"/>
        <dbReference type="ChEBI" id="CHEBI:29101"/>
    </reaction>
</comment>
<comment type="catalytic activity">
    <reaction evidence="1">
        <text>Li(+)(in) = Li(+)(out)</text>
        <dbReference type="Rhea" id="RHEA:78551"/>
        <dbReference type="ChEBI" id="CHEBI:49713"/>
    </reaction>
</comment>
<comment type="catalytic activity">
    <reaction evidence="1">
        <text>Cs(+)(in) = Cs(+)(out)</text>
        <dbReference type="Rhea" id="RHEA:78555"/>
        <dbReference type="ChEBI" id="CHEBI:49547"/>
    </reaction>
</comment>
<comment type="activity regulation">
    <text evidence="1">May be operated by a phosphatidylinositol second messenger system activated by receptor tyrosine kinases or G-protein coupled receptors (By similarity). Also activated by intracellular calcium store depletion (By similarity).</text>
</comment>
<comment type="subunit">
    <text evidence="1 2">Heterotetramer with TRPC4 and/or TRPC5 (By similarity). Forms a heteromeric ion channel with TRPC4, with a 1:3 TRPC1:TRPC4 stoichiometry (By similarity). Unlike other TRP channel proteins, does not form a homomeric channel (By similarity). Interacts with TRPC4AP (By similarity). Interacts with ITPR3 (By similarity). Interacts with MX1 and RNF24 (By similarity). Interacts with FKBP4 (By similarity). Interacts with PLSCR1 (By similarity). Interacts with PKD2L2 (By similarity). Forms a heterotetramer with PKD2 with a 2:2 stoichiometry; has distinct channel properties separate from PKD2 or TRPC1 homomers alone (By similarity).</text>
</comment>
<comment type="subcellular location">
    <subcellularLocation>
        <location evidence="1">Cell membrane</location>
        <topology evidence="1">Multi-pass membrane protein</topology>
    </subcellularLocation>
</comment>
<comment type="alternative products">
    <event type="alternative splicing"/>
    <isoform>
        <id>O18784-1</id>
        <name>Long</name>
        <sequence type="displayed"/>
    </isoform>
    <isoform>
        <id>O18784-2</id>
        <name>Short</name>
        <sequence type="described" ref="VSP_006559"/>
    </isoform>
</comment>
<comment type="PTM">
    <text evidence="1">Activation of PRKCA induces phosphorylation of TRPC1 and subsequent Ca2+ entry into cells.</text>
</comment>
<comment type="similarity">
    <text evidence="5">Belongs to the transient receptor (TC 1.A.4) family. STrpC subfamily. TRPC1 sub-subfamily.</text>
</comment>
<proteinExistence type="evidence at transcript level"/>
<feature type="chain" id="PRO_0000215302" description="Short transient receptor potential channel 1">
    <location>
        <begin position="1"/>
        <end position="793"/>
    </location>
</feature>
<feature type="topological domain" description="Cytoplasmic" evidence="1">
    <location>
        <begin position="1"/>
        <end position="345"/>
    </location>
</feature>
<feature type="intramembrane region" description="Discontinuously helical; Name=Pre-S1" evidence="1">
    <location>
        <begin position="346"/>
        <end position="379"/>
    </location>
</feature>
<feature type="topological domain" description="Cytoplasmic" evidence="1">
    <location>
        <begin position="380"/>
        <end position="386"/>
    </location>
</feature>
<feature type="transmembrane region" description="Helical; Name=S1" evidence="1">
    <location>
        <begin position="387"/>
        <end position="404"/>
    </location>
</feature>
<feature type="topological domain" description="Extracellular" evidence="1">
    <location>
        <begin position="405"/>
        <end position="422"/>
    </location>
</feature>
<feature type="transmembrane region" description="Helical; Name=S2" evidence="1">
    <location>
        <begin position="423"/>
        <end position="439"/>
    </location>
</feature>
<feature type="topological domain" description="Cytoplasmic" evidence="1">
    <location>
        <begin position="440"/>
        <end position="455"/>
    </location>
</feature>
<feature type="transmembrane region" description="Helical; Name=S3" evidence="1">
    <location>
        <begin position="456"/>
        <end position="475"/>
    </location>
</feature>
<feature type="topological domain" description="Extracellular" evidence="1">
    <location>
        <begin position="476"/>
        <end position="496"/>
    </location>
</feature>
<feature type="transmembrane region" description="Helical; Name=S4" evidence="1">
    <location>
        <begin position="497"/>
        <end position="517"/>
    </location>
</feature>
<feature type="topological domain" description="Cytoplasmic" evidence="1">
    <location>
        <begin position="518"/>
        <end position="536"/>
    </location>
</feature>
<feature type="transmembrane region" description="Helical; Name=S5" evidence="1">
    <location>
        <begin position="537"/>
        <end position="558"/>
    </location>
</feature>
<feature type="topological domain" description="Extracellular" evidence="1">
    <location>
        <begin position="559"/>
        <end position="623"/>
    </location>
</feature>
<feature type="transmembrane region" description="Helical; Name=S6" evidence="1">
    <location>
        <begin position="624"/>
        <end position="644"/>
    </location>
</feature>
<feature type="topological domain" description="Cytoplasmic" evidence="1">
    <location>
        <begin position="645"/>
        <end position="793"/>
    </location>
</feature>
<feature type="repeat" description="ANK 1" evidence="1">
    <location>
        <begin position="46"/>
        <end position="75"/>
    </location>
</feature>
<feature type="repeat" description="ANK 2" evidence="1">
    <location>
        <begin position="83"/>
        <end position="109"/>
    </location>
</feature>
<feature type="repeat" description="ANK 3" evidence="1">
    <location>
        <begin position="111"/>
        <end position="156"/>
    </location>
</feature>
<feature type="repeat" description="ANK 4" evidence="1">
    <location>
        <begin position="158"/>
        <end position="180"/>
    </location>
</feature>
<feature type="region of interest" description="Disordered" evidence="3">
    <location>
        <begin position="1"/>
        <end position="30"/>
    </location>
</feature>
<feature type="compositionally biased region" description="Low complexity" evidence="3">
    <location>
        <begin position="15"/>
        <end position="28"/>
    </location>
</feature>
<feature type="binding site" evidence="1">
    <location>
        <position position="189"/>
    </location>
    <ligand>
        <name>Zn(2+)</name>
        <dbReference type="ChEBI" id="CHEBI:29105"/>
    </ligand>
</feature>
<feature type="binding site" evidence="1">
    <location>
        <position position="193"/>
    </location>
    <ligand>
        <name>Zn(2+)</name>
        <dbReference type="ChEBI" id="CHEBI:29105"/>
    </ligand>
</feature>
<feature type="binding site" evidence="1">
    <location>
        <position position="195"/>
    </location>
    <ligand>
        <name>Zn(2+)</name>
        <dbReference type="ChEBI" id="CHEBI:29105"/>
    </ligand>
</feature>
<feature type="binding site" evidence="1">
    <location>
        <position position="198"/>
    </location>
    <ligand>
        <name>Zn(2+)</name>
        <dbReference type="ChEBI" id="CHEBI:29105"/>
    </ligand>
</feature>
<feature type="disulfide bond" evidence="1">
    <location>
        <begin position="571"/>
        <end position="576"/>
    </location>
</feature>
<feature type="splice variant" id="VSP_006559" description="In isoform Short." evidence="4">
    <location>
        <begin position="110"/>
        <end position="143"/>
    </location>
</feature>
<evidence type="ECO:0000250" key="1">
    <source>
        <dbReference type="UniProtKB" id="P48995"/>
    </source>
</evidence>
<evidence type="ECO:0000250" key="2">
    <source>
        <dbReference type="UniProtKB" id="Q61056"/>
    </source>
</evidence>
<evidence type="ECO:0000256" key="3">
    <source>
        <dbReference type="SAM" id="MobiDB-lite"/>
    </source>
</evidence>
<evidence type="ECO:0000303" key="4">
    <source>
    </source>
</evidence>
<evidence type="ECO:0000305" key="5"/>
<accession>O18784</accession>
<accession>O18785</accession>
<name>TRPC1_BOVIN</name>
<organism>
    <name type="scientific">Bos taurus</name>
    <name type="common">Bovine</name>
    <dbReference type="NCBI Taxonomy" id="9913"/>
    <lineage>
        <taxon>Eukaryota</taxon>
        <taxon>Metazoa</taxon>
        <taxon>Chordata</taxon>
        <taxon>Craniata</taxon>
        <taxon>Vertebrata</taxon>
        <taxon>Euteleostomi</taxon>
        <taxon>Mammalia</taxon>
        <taxon>Eutheria</taxon>
        <taxon>Laurasiatheria</taxon>
        <taxon>Artiodactyla</taxon>
        <taxon>Ruminantia</taxon>
        <taxon>Pecora</taxon>
        <taxon>Bovidae</taxon>
        <taxon>Bovinae</taxon>
        <taxon>Bos</taxon>
    </lineage>
</organism>
<gene>
    <name type="primary">TRPC1</name>
    <name type="synonym">TRP1</name>
</gene>
<reference key="1">
    <citation type="journal article" date="1997" name="FEBS Lett.">
        <title>Concomitant and hormonally regulated expression of trp genes in bovine aortic endothelial cells.</title>
        <authorList>
            <person name="Chang A.S."/>
            <person name="Chang S.M."/>
            <person name="Garcia R.L."/>
            <person name="Schilling W.P."/>
        </authorList>
    </citation>
    <scope>NUCLEOTIDE SEQUENCE [MRNA] (ISOFORMS LONG AND SHORT)</scope>
    <source>
        <tissue>Aorta</tissue>
    </source>
</reference>
<sequence>MMAALYPSTDLSGASSSSLPSSPSSSSPNEVMALKDVREVKEENTLNEKLFLLACDKGDYYMVKEILEENSSGDLNINCVDVLGRNAVTITIENENLDILQLLLDYGCQSADALLVAIDSEVVGAVDILLNHRPKRSSRPTIVKLMERIQNPEYSTTMDVAPVILAAHRNNYEILTMLLKQDVSLPKPHAVGCECTLCSAKNKKDSLRHSRFRLDIYRCLASPALIMLTEEDPILGAFELSADLKELSLVEVEFRNDYEELARQCKMFAKDLLAQARNSRELEVILNHTSNDEPLDKRGLLEERMNLSRLKLAIKYNQKEFVSQSNCQQFLNTVWFGQMSGYRRKPTCKKIMTVLTVGIFWPVLSLCYLIAPKSQFGRIIHTPFMKFIIHGASYFTFLLLLNLYSLVYHEDKKNTMGPALERIDYLLILWIIGMIWSDIKRLWYEGLEDFLEESRNQLSFVMNSLYLATFALKEEAHNKFHDFADRKDWDAFHPTLVAEGLFAFANVLSYLRLFFYVYTSSILGPLQISMGRMLQDFGKFLGMFLLVLFSFTIGLTQLYDKGYTPKEQKDCVGIFCEQQSNDTFHSFIGTCFALFWYIFSLAHVAILCTRFSYGEELQSFVGAFIVGTYNVVVVIVLTKLLVAMLHKSFQLIANHEDKEWKFARAKLWLSYFDDKCTLPPPFNIIPSPKTICYMISSLSKWICSHTSKGKVKRQNSLKEWRHLNEKRDENYQKVMCCLVRRYLTSMRQKMQSTDQATVENLNELRQDLSKFRNEIRDLLGFRTSKYAMFYPRN</sequence>
<keyword id="KW-0025">Alternative splicing</keyword>
<keyword id="KW-0040">ANK repeat</keyword>
<keyword id="KW-0106">Calcium</keyword>
<keyword id="KW-0107">Calcium channel</keyword>
<keyword id="KW-0109">Calcium transport</keyword>
<keyword id="KW-1003">Cell membrane</keyword>
<keyword id="KW-1015">Disulfide bond</keyword>
<keyword id="KW-0407">Ion channel</keyword>
<keyword id="KW-0406">Ion transport</keyword>
<keyword id="KW-0472">Membrane</keyword>
<keyword id="KW-0479">Metal-binding</keyword>
<keyword id="KW-0597">Phosphoprotein</keyword>
<keyword id="KW-1185">Reference proteome</keyword>
<keyword id="KW-0677">Repeat</keyword>
<keyword id="KW-0812">Transmembrane</keyword>
<keyword id="KW-1133">Transmembrane helix</keyword>
<keyword id="KW-0813">Transport</keyword>
<keyword id="KW-0862">Zinc</keyword>